<reference key="1">
    <citation type="journal article" date="1997" name="Science">
        <title>The complete genome sequence of Escherichia coli K-12.</title>
        <authorList>
            <person name="Blattner F.R."/>
            <person name="Plunkett G. III"/>
            <person name="Bloch C.A."/>
            <person name="Perna N.T."/>
            <person name="Burland V."/>
            <person name="Riley M."/>
            <person name="Collado-Vides J."/>
            <person name="Glasner J.D."/>
            <person name="Rode C.K."/>
            <person name="Mayhew G.F."/>
            <person name="Gregor J."/>
            <person name="Davis N.W."/>
            <person name="Kirkpatrick H.A."/>
            <person name="Goeden M.A."/>
            <person name="Rose D.J."/>
            <person name="Mau B."/>
            <person name="Shao Y."/>
        </authorList>
    </citation>
    <scope>NUCLEOTIDE SEQUENCE [LARGE SCALE GENOMIC DNA]</scope>
    <source>
        <strain>K12 / MG1655 / ATCC 47076</strain>
    </source>
</reference>
<reference key="2">
    <citation type="journal article" date="2006" name="Mol. Syst. Biol.">
        <title>Highly accurate genome sequences of Escherichia coli K-12 strains MG1655 and W3110.</title>
        <authorList>
            <person name="Hayashi K."/>
            <person name="Morooka N."/>
            <person name="Yamamoto Y."/>
            <person name="Fujita K."/>
            <person name="Isono K."/>
            <person name="Choi S."/>
            <person name="Ohtsubo E."/>
            <person name="Baba T."/>
            <person name="Wanner B.L."/>
            <person name="Mori H."/>
            <person name="Horiuchi T."/>
        </authorList>
    </citation>
    <scope>NUCLEOTIDE SEQUENCE [LARGE SCALE GENOMIC DNA]</scope>
    <source>
        <strain>K12 / W3110 / ATCC 27325 / DSM 5911</strain>
    </source>
</reference>
<reference key="3">
    <citation type="journal article" date="2006" name="J. Mol. Biol.">
        <title>Identification of Escherichia coli m2G methyltransferases: II. The ygjO gene encodes a methyltransferase specific for G1835 of the 23 S rRNA.</title>
        <authorList>
            <person name="Sergiev P.V."/>
            <person name="Lesnyak D.V."/>
            <person name="Bogdanov A.A."/>
            <person name="Dontsova O.A."/>
        </authorList>
    </citation>
    <scope>FUNCTION AS RRNA METHYLTRANSFERASE</scope>
    <scope>CATALYTIC ACTIVITY</scope>
</reference>
<feature type="chain" id="PRO_0000097492" description="Ribosomal RNA large subunit methyltransferase G">
    <location>
        <begin position="1"/>
        <end position="378"/>
    </location>
</feature>
<feature type="helix" evidence="3">
    <location>
        <begin position="30"/>
        <end position="37"/>
    </location>
</feature>
<feature type="turn" evidence="3">
    <location>
        <begin position="38"/>
        <end position="41"/>
    </location>
</feature>
<feature type="strand" evidence="3">
    <location>
        <begin position="48"/>
        <end position="51"/>
    </location>
</feature>
<feature type="strand" evidence="3">
    <location>
        <begin position="54"/>
        <end position="56"/>
    </location>
</feature>
<feature type="helix" evidence="3">
    <location>
        <begin position="57"/>
        <end position="61"/>
    </location>
</feature>
<feature type="helix" evidence="3">
    <location>
        <begin position="63"/>
        <end position="65"/>
    </location>
</feature>
<feature type="strand" evidence="3">
    <location>
        <begin position="68"/>
        <end position="72"/>
    </location>
</feature>
<feature type="helix" evidence="3">
    <location>
        <begin position="74"/>
        <end position="86"/>
    </location>
</feature>
<feature type="helix" evidence="3">
    <location>
        <begin position="91"/>
        <end position="93"/>
    </location>
</feature>
<feature type="strand" evidence="3">
    <location>
        <begin position="94"/>
        <end position="98"/>
    </location>
</feature>
<feature type="strand" evidence="3">
    <location>
        <begin position="108"/>
        <end position="113"/>
    </location>
</feature>
<feature type="helix" evidence="3">
    <location>
        <begin position="118"/>
        <end position="129"/>
    </location>
</feature>
<feature type="strand" evidence="3">
    <location>
        <begin position="136"/>
        <end position="143"/>
    </location>
</feature>
<feature type="helix" evidence="3">
    <location>
        <begin position="144"/>
        <end position="146"/>
    </location>
</feature>
<feature type="helix" evidence="3">
    <location>
        <begin position="149"/>
        <end position="158"/>
    </location>
</feature>
<feature type="strand" evidence="3">
    <location>
        <begin position="162"/>
        <end position="164"/>
    </location>
</feature>
<feature type="strand" evidence="3">
    <location>
        <begin position="171"/>
        <end position="176"/>
    </location>
</feature>
<feature type="strand" evidence="3">
    <location>
        <begin position="190"/>
        <end position="194"/>
    </location>
</feature>
<feature type="turn" evidence="3">
    <location>
        <begin position="195"/>
        <end position="198"/>
    </location>
</feature>
<feature type="strand" evidence="3">
    <location>
        <begin position="199"/>
        <end position="203"/>
    </location>
</feature>
<feature type="helix" evidence="3">
    <location>
        <begin position="215"/>
        <end position="222"/>
    </location>
</feature>
<feature type="strand" evidence="3">
    <location>
        <begin position="230"/>
        <end position="236"/>
    </location>
</feature>
<feature type="helix" evidence="3">
    <location>
        <begin position="241"/>
        <end position="249"/>
    </location>
</feature>
<feature type="strand" evidence="3">
    <location>
        <begin position="254"/>
        <end position="260"/>
    </location>
</feature>
<feature type="helix" evidence="3">
    <location>
        <begin position="262"/>
        <end position="275"/>
    </location>
</feature>
<feature type="helix" evidence="3">
    <location>
        <begin position="277"/>
        <end position="282"/>
    </location>
</feature>
<feature type="strand" evidence="3">
    <location>
        <begin position="283"/>
        <end position="287"/>
    </location>
</feature>
<feature type="turn" evidence="3">
    <location>
        <begin position="290"/>
        <end position="293"/>
    </location>
</feature>
<feature type="strand" evidence="3">
    <location>
        <begin position="299"/>
        <end position="304"/>
    </location>
</feature>
<feature type="helix" evidence="3">
    <location>
        <begin position="318"/>
        <end position="329"/>
    </location>
</feature>
<feature type="strand" evidence="3">
    <location>
        <begin position="330"/>
        <end position="341"/>
    </location>
</feature>
<feature type="helix" evidence="3">
    <location>
        <begin position="346"/>
        <end position="354"/>
    </location>
</feature>
<feature type="strand" evidence="3">
    <location>
        <begin position="358"/>
        <end position="362"/>
    </location>
</feature>
<feature type="strand" evidence="3">
    <location>
        <begin position="364"/>
        <end position="372"/>
    </location>
</feature>
<proteinExistence type="evidence at protein level"/>
<evidence type="ECO:0000269" key="1">
    <source>
    </source>
</evidence>
<evidence type="ECO:0000305" key="2"/>
<evidence type="ECO:0007829" key="3">
    <source>
        <dbReference type="PDB" id="4DCM"/>
    </source>
</evidence>
<dbReference type="EC" id="2.1.1.174" evidence="1"/>
<dbReference type="EMBL" id="U18997">
    <property type="protein sequence ID" value="AAA57885.1"/>
    <property type="status" value="ALT_INIT"/>
    <property type="molecule type" value="Genomic_DNA"/>
</dbReference>
<dbReference type="EMBL" id="U00096">
    <property type="protein sequence ID" value="AAC76119.2"/>
    <property type="molecule type" value="Genomic_DNA"/>
</dbReference>
<dbReference type="EMBL" id="AP009048">
    <property type="protein sequence ID" value="BAE77134.1"/>
    <property type="molecule type" value="Genomic_DNA"/>
</dbReference>
<dbReference type="PIR" id="A65097">
    <property type="entry name" value="A65097"/>
</dbReference>
<dbReference type="RefSeq" id="NP_417555.4">
    <property type="nucleotide sequence ID" value="NC_000913.3"/>
</dbReference>
<dbReference type="RefSeq" id="WP_000018695.1">
    <property type="nucleotide sequence ID" value="NZ_LN832404.1"/>
</dbReference>
<dbReference type="PDB" id="4DCM">
    <property type="method" value="X-ray"/>
    <property type="resolution" value="2.30 A"/>
    <property type="chains" value="A=9-373"/>
</dbReference>
<dbReference type="PDBsum" id="4DCM"/>
<dbReference type="SMR" id="P42596"/>
<dbReference type="BioGRID" id="4260876">
    <property type="interactions" value="56"/>
</dbReference>
<dbReference type="BioGRID" id="851905">
    <property type="interactions" value="1"/>
</dbReference>
<dbReference type="FunCoup" id="P42596">
    <property type="interactions" value="75"/>
</dbReference>
<dbReference type="IntAct" id="P42596">
    <property type="interactions" value="1"/>
</dbReference>
<dbReference type="STRING" id="511145.b3084"/>
<dbReference type="jPOST" id="P42596"/>
<dbReference type="PaxDb" id="511145-b3084"/>
<dbReference type="EnsemblBacteria" id="AAC76119">
    <property type="protein sequence ID" value="AAC76119"/>
    <property type="gene ID" value="b3084"/>
</dbReference>
<dbReference type="GeneID" id="947589"/>
<dbReference type="KEGG" id="ecj:JW5513"/>
<dbReference type="KEGG" id="eco:b3084"/>
<dbReference type="KEGG" id="ecoc:C3026_16845"/>
<dbReference type="PATRIC" id="fig|511145.12.peg.3179"/>
<dbReference type="EchoBASE" id="EB2585"/>
<dbReference type="eggNOG" id="COG2813">
    <property type="taxonomic scope" value="Bacteria"/>
</dbReference>
<dbReference type="HOGENOM" id="CLU_040288_4_0_6"/>
<dbReference type="InParanoid" id="P42596"/>
<dbReference type="OMA" id="NRHLGYH"/>
<dbReference type="OrthoDB" id="29650at2"/>
<dbReference type="PhylomeDB" id="P42596"/>
<dbReference type="BioCyc" id="EcoCyc:G7603-MONOMER"/>
<dbReference type="BioCyc" id="MetaCyc:G7603-MONOMER"/>
<dbReference type="BRENDA" id="2.1.1.174">
    <property type="organism ID" value="2026"/>
</dbReference>
<dbReference type="EvolutionaryTrace" id="P42596"/>
<dbReference type="PRO" id="PR:P42596"/>
<dbReference type="Proteomes" id="UP000000625">
    <property type="component" value="Chromosome"/>
</dbReference>
<dbReference type="GO" id="GO:0005737">
    <property type="term" value="C:cytoplasm"/>
    <property type="evidence" value="ECO:0007669"/>
    <property type="project" value="UniProtKB-SubCell"/>
</dbReference>
<dbReference type="GO" id="GO:0052916">
    <property type="term" value="F:23S rRNA (guanine(1835)-N(2))-methyltransferase activity"/>
    <property type="evidence" value="ECO:0000314"/>
    <property type="project" value="EcoCyc"/>
</dbReference>
<dbReference type="GO" id="GO:0003676">
    <property type="term" value="F:nucleic acid binding"/>
    <property type="evidence" value="ECO:0007669"/>
    <property type="project" value="InterPro"/>
</dbReference>
<dbReference type="GO" id="GO:0008990">
    <property type="term" value="F:rRNA (guanine-N2-)-methyltransferase activity"/>
    <property type="evidence" value="ECO:0000318"/>
    <property type="project" value="GO_Central"/>
</dbReference>
<dbReference type="GO" id="GO:0070475">
    <property type="term" value="P:rRNA base methylation"/>
    <property type="evidence" value="ECO:0000315"/>
    <property type="project" value="EcoCyc"/>
</dbReference>
<dbReference type="CDD" id="cd02440">
    <property type="entry name" value="AdoMet_MTases"/>
    <property type="match status" value="1"/>
</dbReference>
<dbReference type="FunFam" id="3.40.50.150:FF:000046">
    <property type="entry name" value="Ribosomal RNA large subunit methyltransferase G"/>
    <property type="match status" value="1"/>
</dbReference>
<dbReference type="FunFam" id="3.40.50.150:FF:000047">
    <property type="entry name" value="Ribosomal RNA large subunit methyltransferase G"/>
    <property type="match status" value="1"/>
</dbReference>
<dbReference type="Gene3D" id="3.40.50.150">
    <property type="entry name" value="Vaccinia Virus protein VP39"/>
    <property type="match status" value="2"/>
</dbReference>
<dbReference type="HAMAP" id="MF_01859">
    <property type="entry name" value="23SrRNA_methyltr_G"/>
    <property type="match status" value="1"/>
</dbReference>
<dbReference type="InterPro" id="IPR002052">
    <property type="entry name" value="DNA_methylase_N6_adenine_CS"/>
</dbReference>
<dbReference type="InterPro" id="IPR017237">
    <property type="entry name" value="rRNA_m2G-MeTrfase_RlmG"/>
</dbReference>
<dbReference type="InterPro" id="IPR046977">
    <property type="entry name" value="RsmC/RlmG"/>
</dbReference>
<dbReference type="InterPro" id="IPR029063">
    <property type="entry name" value="SAM-dependent_MTases_sf"/>
</dbReference>
<dbReference type="InterPro" id="IPR007848">
    <property type="entry name" value="Small_mtfrase_dom"/>
</dbReference>
<dbReference type="NCBIfam" id="NF011577">
    <property type="entry name" value="PRK15001.1"/>
    <property type="match status" value="1"/>
</dbReference>
<dbReference type="PANTHER" id="PTHR47816:SF5">
    <property type="entry name" value="RIBOSOMAL RNA LARGE SUBUNIT METHYLTRANSFERASE G"/>
    <property type="match status" value="1"/>
</dbReference>
<dbReference type="PANTHER" id="PTHR47816">
    <property type="entry name" value="RIBOSOMAL RNA SMALL SUBUNIT METHYLTRANSFERASE C"/>
    <property type="match status" value="1"/>
</dbReference>
<dbReference type="Pfam" id="PF05175">
    <property type="entry name" value="MTS"/>
    <property type="match status" value="1"/>
</dbReference>
<dbReference type="PIRSF" id="PIRSF037565">
    <property type="entry name" value="RRNA_m2G_Mtase_RsmD_prd"/>
    <property type="match status" value="1"/>
</dbReference>
<dbReference type="SUPFAM" id="SSF53335">
    <property type="entry name" value="S-adenosyl-L-methionine-dependent methyltransferases"/>
    <property type="match status" value="1"/>
</dbReference>
<accession>P42596</accession>
<accession>Q2M9C2</accession>
<keyword id="KW-0002">3D-structure</keyword>
<keyword id="KW-0963">Cytoplasm</keyword>
<keyword id="KW-0489">Methyltransferase</keyword>
<keyword id="KW-1185">Reference proteome</keyword>
<keyword id="KW-0698">rRNA processing</keyword>
<keyword id="KW-0949">S-adenosyl-L-methionine</keyword>
<keyword id="KW-0808">Transferase</keyword>
<sequence length="378" mass="42331">MSHLDNGFRSLTLQRFPATDDVNPLQAWEAADEYLLQQLDDTEIRGPVLILNDAFGALSCALAEHKPYSIGDSYISELATRENLRLNGIDESSVKFLDSTADYPQQPGVVLIKVPKTLALLEQQLRALRKVVTSDTRIIAGAKARDIHTSTLELFEKVLGPTTTTLAWKKARLINCTFNEPQLADAPQTVSWKLEGTDWTIHNHANVFSRTGLDIGARFFMQHLPENLEGEIVDLGCGNGVIGLTLLDKNPQAKVVFVDESPMAVASSRLNVETNMPEALDRCEFMINNALSGVEPFRFNAVLCNPPFHQQHALTDNVAWEMFHHARRCLKINGELYIVANRHLDYFHKLKKIFGNCTTIATNNKFVVLKAVKLGRRR</sequence>
<protein>
    <recommendedName>
        <fullName>Ribosomal RNA large subunit methyltransferase G</fullName>
        <ecNumber evidence="1">2.1.1.174</ecNumber>
    </recommendedName>
    <alternativeName>
        <fullName>23S rRNA m2G1835 methyltransferase</fullName>
    </alternativeName>
    <alternativeName>
        <fullName>rRNA (guanine-N(2)-)-methyltransferase RlmG</fullName>
    </alternativeName>
</protein>
<gene>
    <name type="primary">rlmG</name>
    <name type="synonym">ygjO</name>
    <name type="ordered locus">b3084</name>
    <name type="ordered locus">JW5513</name>
</gene>
<organism>
    <name type="scientific">Escherichia coli (strain K12)</name>
    <dbReference type="NCBI Taxonomy" id="83333"/>
    <lineage>
        <taxon>Bacteria</taxon>
        <taxon>Pseudomonadati</taxon>
        <taxon>Pseudomonadota</taxon>
        <taxon>Gammaproteobacteria</taxon>
        <taxon>Enterobacterales</taxon>
        <taxon>Enterobacteriaceae</taxon>
        <taxon>Escherichia</taxon>
    </lineage>
</organism>
<name>RLMG_ECOLI</name>
<comment type="function">
    <text evidence="1">Specifically methylates the guanine in position 1835 (m2G1835) of 23S rRNA.</text>
</comment>
<comment type="catalytic activity">
    <reaction evidence="1">
        <text>guanosine(1835) in 23S rRNA + S-adenosyl-L-methionine = N(2)-methylguanosine(1835) in 23S rRNA + S-adenosyl-L-homocysteine + H(+)</text>
        <dbReference type="Rhea" id="RHEA:42744"/>
        <dbReference type="Rhea" id="RHEA-COMP:10217"/>
        <dbReference type="Rhea" id="RHEA-COMP:10218"/>
        <dbReference type="ChEBI" id="CHEBI:15378"/>
        <dbReference type="ChEBI" id="CHEBI:57856"/>
        <dbReference type="ChEBI" id="CHEBI:59789"/>
        <dbReference type="ChEBI" id="CHEBI:74269"/>
        <dbReference type="ChEBI" id="CHEBI:74481"/>
        <dbReference type="EC" id="2.1.1.174"/>
    </reaction>
    <physiologicalReaction direction="left-to-right" evidence="1">
        <dbReference type="Rhea" id="RHEA:42745"/>
    </physiologicalReaction>
</comment>
<comment type="subcellular location">
    <subcellularLocation>
        <location evidence="2">Cytoplasm</location>
    </subcellularLocation>
</comment>
<comment type="similarity">
    <text evidence="2">Belongs to the methyltransferase superfamily. RlmG family.</text>
</comment>
<comment type="sequence caution" evidence="2">
    <conflict type="erroneous initiation">
        <sequence resource="EMBL-CDS" id="AAA57885"/>
    </conflict>
    <text>Extended N-terminus.</text>
</comment>